<organism>
    <name type="scientific">Capra hircus</name>
    <name type="common">Goat</name>
    <dbReference type="NCBI Taxonomy" id="9925"/>
    <lineage>
        <taxon>Eukaryota</taxon>
        <taxon>Metazoa</taxon>
        <taxon>Chordata</taxon>
        <taxon>Craniata</taxon>
        <taxon>Vertebrata</taxon>
        <taxon>Euteleostomi</taxon>
        <taxon>Mammalia</taxon>
        <taxon>Eutheria</taxon>
        <taxon>Laurasiatheria</taxon>
        <taxon>Artiodactyla</taxon>
        <taxon>Ruminantia</taxon>
        <taxon>Pecora</taxon>
        <taxon>Bovidae</taxon>
        <taxon>Caprinae</taxon>
        <taxon>Capra</taxon>
    </lineage>
</organism>
<accession>Q95170</accession>
<reference key="1">
    <citation type="journal article" date="1997" name="Gene">
        <title>Cloning and expression of the red visual pigment gene of goat (Capra hircus).</title>
        <authorList>
            <person name="Radlwimmer F.B."/>
            <person name="Yokoyama S."/>
        </authorList>
    </citation>
    <scope>NUCLEOTIDE SEQUENCE [GENOMIC DNA]</scope>
</reference>
<gene>
    <name type="primary">OPN1LW</name>
    <name type="synonym">RCP</name>
</gene>
<name>OPSR_CAPHI</name>
<dbReference type="EMBL" id="U68004">
    <property type="protein sequence ID" value="AAC48773.1"/>
    <property type="molecule type" value="Genomic_DNA"/>
</dbReference>
<dbReference type="EMBL" id="U67999">
    <property type="protein sequence ID" value="AAC48773.1"/>
    <property type="status" value="JOINED"/>
    <property type="molecule type" value="Genomic_DNA"/>
</dbReference>
<dbReference type="EMBL" id="U68000">
    <property type="protein sequence ID" value="AAC48773.1"/>
    <property type="status" value="JOINED"/>
    <property type="molecule type" value="Genomic_DNA"/>
</dbReference>
<dbReference type="EMBL" id="U68001">
    <property type="protein sequence ID" value="AAC48773.1"/>
    <property type="status" value="JOINED"/>
    <property type="molecule type" value="Genomic_DNA"/>
</dbReference>
<dbReference type="EMBL" id="U68002">
    <property type="protein sequence ID" value="AAC48773.1"/>
    <property type="status" value="JOINED"/>
    <property type="molecule type" value="Genomic_DNA"/>
</dbReference>
<dbReference type="EMBL" id="U68003">
    <property type="protein sequence ID" value="AAC48773.1"/>
    <property type="status" value="JOINED"/>
    <property type="molecule type" value="Genomic_DNA"/>
</dbReference>
<dbReference type="SMR" id="Q95170"/>
<dbReference type="STRING" id="9925.ENSCHIP00000014220"/>
<dbReference type="GlyCosmos" id="Q95170">
    <property type="glycosylation" value="2 sites, No reported glycans"/>
</dbReference>
<dbReference type="Ensembl" id="ENSCHIT00000022014.1">
    <property type="protein sequence ID" value="ENSCHIP00000014220.1"/>
    <property type="gene ID" value="ENSCHIG00000015283.1"/>
</dbReference>
<dbReference type="Ensembl" id="ENSCHIT00020055585">
    <property type="protein sequence ID" value="ENSCHIP00020042624"/>
    <property type="gene ID" value="ENSCHIG00020026857"/>
</dbReference>
<dbReference type="Ensembl" id="ENSCHIT00040036381">
    <property type="protein sequence ID" value="ENSCHIP00040029274"/>
    <property type="gene ID" value="ENSCHIG00040016703"/>
</dbReference>
<dbReference type="GeneID" id="102175286"/>
<dbReference type="KEGG" id="chx:102175286"/>
<dbReference type="GeneTree" id="ENSGT01030000234549"/>
<dbReference type="OrthoDB" id="8545112at2759"/>
<dbReference type="Proteomes" id="UP000291000">
    <property type="component" value="Unassembled WGS sequence"/>
</dbReference>
<dbReference type="Proteomes" id="UP000694566">
    <property type="component" value="Unplaced"/>
</dbReference>
<dbReference type="GO" id="GO:0016020">
    <property type="term" value="C:membrane"/>
    <property type="evidence" value="ECO:0007669"/>
    <property type="project" value="UniProtKB-SubCell"/>
</dbReference>
<dbReference type="GO" id="GO:0004930">
    <property type="term" value="F:G protein-coupled receptor activity"/>
    <property type="evidence" value="ECO:0007669"/>
    <property type="project" value="UniProtKB-KW"/>
</dbReference>
<dbReference type="GO" id="GO:0009881">
    <property type="term" value="F:photoreceptor activity"/>
    <property type="evidence" value="ECO:0007669"/>
    <property type="project" value="UniProtKB-KW"/>
</dbReference>
<dbReference type="GO" id="GO:0007602">
    <property type="term" value="P:phototransduction"/>
    <property type="evidence" value="ECO:0007669"/>
    <property type="project" value="UniProtKB-KW"/>
</dbReference>
<dbReference type="GO" id="GO:0007601">
    <property type="term" value="P:visual perception"/>
    <property type="evidence" value="ECO:0007669"/>
    <property type="project" value="UniProtKB-KW"/>
</dbReference>
<dbReference type="FunFam" id="1.20.1070.10:FF:000090">
    <property type="entry name" value="Long-wave-sensitive opsin 1"/>
    <property type="match status" value="1"/>
</dbReference>
<dbReference type="Gene3D" id="1.20.1070.10">
    <property type="entry name" value="Rhodopsin 7-helix transmembrane proteins"/>
    <property type="match status" value="1"/>
</dbReference>
<dbReference type="InterPro" id="IPR050125">
    <property type="entry name" value="GPCR_opsins"/>
</dbReference>
<dbReference type="InterPro" id="IPR000276">
    <property type="entry name" value="GPCR_Rhodpsn"/>
</dbReference>
<dbReference type="InterPro" id="IPR017452">
    <property type="entry name" value="GPCR_Rhodpsn_7TM"/>
</dbReference>
<dbReference type="InterPro" id="IPR001760">
    <property type="entry name" value="Opsin"/>
</dbReference>
<dbReference type="InterPro" id="IPR000378">
    <property type="entry name" value="Opsin_red/grn"/>
</dbReference>
<dbReference type="InterPro" id="IPR027430">
    <property type="entry name" value="Retinal_BS"/>
</dbReference>
<dbReference type="PANTHER" id="PTHR24240">
    <property type="entry name" value="OPSIN"/>
    <property type="match status" value="1"/>
</dbReference>
<dbReference type="Pfam" id="PF00001">
    <property type="entry name" value="7tm_1"/>
    <property type="match status" value="1"/>
</dbReference>
<dbReference type="PRINTS" id="PR00237">
    <property type="entry name" value="GPCRRHODOPSN"/>
</dbReference>
<dbReference type="PRINTS" id="PR00238">
    <property type="entry name" value="OPSIN"/>
</dbReference>
<dbReference type="PRINTS" id="PR00575">
    <property type="entry name" value="OPSINREDGRN"/>
</dbReference>
<dbReference type="SMART" id="SM01381">
    <property type="entry name" value="7TM_GPCR_Srsx"/>
    <property type="match status" value="1"/>
</dbReference>
<dbReference type="SUPFAM" id="SSF81321">
    <property type="entry name" value="Family A G protein-coupled receptor-like"/>
    <property type="match status" value="1"/>
</dbReference>
<dbReference type="PROSITE" id="PS00237">
    <property type="entry name" value="G_PROTEIN_RECEP_F1_1"/>
    <property type="match status" value="1"/>
</dbReference>
<dbReference type="PROSITE" id="PS50262">
    <property type="entry name" value="G_PROTEIN_RECEP_F1_2"/>
    <property type="match status" value="1"/>
</dbReference>
<dbReference type="PROSITE" id="PS00238">
    <property type="entry name" value="OPSIN"/>
    <property type="match status" value="1"/>
</dbReference>
<sequence>MAHTWGPQRLAGGQPQANFEESTQGSIFTYTNSNSTRDPFEGPNYHIAPRWVYHLTSAWMVFVVIASVFTNGLVLAATMRFKKLRHPLNWILVNLAIADLAETIIASTISVVNQMYGYFVLGHPLCVVEGYTVSLCGITGLWSLAIISWERWMVVCKPFGNVRFDAKLATAGIAFSWIWAAVWTAPPIFGWSRYWPHGLKTSCGPDVFSGSSYPGVQSYMIVLMITCCFIPLSVIILCYLQVWLAIRAVAKQQKESESTQKAEKEVTRMVMVMIFAYCLCWGPYTFFACFAAAHPGYAFHPLVAALPAYFAKSATIYNPIIYVFMNRQFRNCILQLFGKKVDDSSELSSVSKTEASSVSSVSPA</sequence>
<evidence type="ECO:0000250" key="1"/>
<evidence type="ECO:0000250" key="2">
    <source>
        <dbReference type="UniProtKB" id="Q9BGI7"/>
    </source>
</evidence>
<evidence type="ECO:0000255" key="3"/>
<evidence type="ECO:0000255" key="4">
    <source>
        <dbReference type="PROSITE-ProRule" id="PRU00498"/>
    </source>
</evidence>
<evidence type="ECO:0000255" key="5">
    <source>
        <dbReference type="PROSITE-ProRule" id="PRU00521"/>
    </source>
</evidence>
<proteinExistence type="evidence at protein level"/>
<protein>
    <recommendedName>
        <fullName>Long-wave-sensitive opsin 1</fullName>
    </recommendedName>
    <alternativeName>
        <fullName>Red cone photoreceptor pigment</fullName>
    </alternativeName>
    <alternativeName>
        <fullName>Red-sensitive opsin</fullName>
    </alternativeName>
</protein>
<feature type="chain" id="PRO_0000197799" description="Long-wave-sensitive opsin 1">
    <location>
        <begin position="1"/>
        <end position="364"/>
    </location>
</feature>
<feature type="topological domain" description="Extracellular">
    <location>
        <begin position="1"/>
        <end position="52"/>
    </location>
</feature>
<feature type="transmembrane region" description="Helical; Name=1" evidence="3">
    <location>
        <begin position="53"/>
        <end position="77"/>
    </location>
</feature>
<feature type="topological domain" description="Cytoplasmic">
    <location>
        <begin position="78"/>
        <end position="89"/>
    </location>
</feature>
<feature type="transmembrane region" description="Helical; Name=2" evidence="3">
    <location>
        <begin position="90"/>
        <end position="115"/>
    </location>
</feature>
<feature type="topological domain" description="Extracellular">
    <location>
        <begin position="116"/>
        <end position="129"/>
    </location>
</feature>
<feature type="transmembrane region" description="Helical; Name=3" evidence="3">
    <location>
        <begin position="130"/>
        <end position="149"/>
    </location>
</feature>
<feature type="topological domain" description="Cytoplasmic">
    <location>
        <begin position="150"/>
        <end position="168"/>
    </location>
</feature>
<feature type="transmembrane region" description="Helical; Name=4" evidence="3">
    <location>
        <begin position="169"/>
        <end position="192"/>
    </location>
</feature>
<feature type="topological domain" description="Extracellular">
    <location>
        <begin position="193"/>
        <end position="218"/>
    </location>
</feature>
<feature type="transmembrane region" description="Helical; Name=5" evidence="3">
    <location>
        <begin position="219"/>
        <end position="246"/>
    </location>
</feature>
<feature type="topological domain" description="Cytoplasmic">
    <location>
        <begin position="247"/>
        <end position="268"/>
    </location>
</feature>
<feature type="transmembrane region" description="Helical; Name=6" evidence="3">
    <location>
        <begin position="269"/>
        <end position="292"/>
    </location>
</feature>
<feature type="topological domain" description="Extracellular">
    <location>
        <begin position="293"/>
        <end position="300"/>
    </location>
</feature>
<feature type="transmembrane region" description="Helical; Name=7" evidence="3">
    <location>
        <begin position="301"/>
        <end position="325"/>
    </location>
</feature>
<feature type="topological domain" description="Cytoplasmic">
    <location>
        <begin position="326"/>
        <end position="364"/>
    </location>
</feature>
<feature type="modified residue" description="N6-(retinylidene)lysine" evidence="1">
    <location>
        <position position="312"/>
    </location>
</feature>
<feature type="glycosylation site" description="O-linked (GlcNAc) serine" evidence="2">
    <location>
        <position position="22"/>
    </location>
</feature>
<feature type="glycosylation site" description="N-linked (GlcNAc...) asparagine" evidence="4">
    <location>
        <position position="34"/>
    </location>
</feature>
<feature type="disulfide bond" evidence="5">
    <location>
        <begin position="126"/>
        <end position="203"/>
    </location>
</feature>
<comment type="function">
    <text>Visual pigments are the light-absorbing molecules that mediate vision. They consist of an apoprotein, opsin, covalently linked to cis-retinal.</text>
</comment>
<comment type="biophysicochemical properties">
    <absorption>
        <max>553 nm</max>
    </absorption>
</comment>
<comment type="subcellular location">
    <subcellularLocation>
        <location>Membrane</location>
        <topology>Multi-pass membrane protein</topology>
    </subcellularLocation>
</comment>
<comment type="tissue specificity">
    <text>The three color pigments are found in the cone photoreceptor cells.</text>
</comment>
<comment type="PTM">
    <text>Phosphorylated on some or all of the serine and threonine residues present in the C-terminal region.</text>
</comment>
<comment type="similarity">
    <text evidence="5">Belongs to the G-protein coupled receptor 1 family. Opsin subfamily.</text>
</comment>
<keyword id="KW-0157">Chromophore</keyword>
<keyword id="KW-1015">Disulfide bond</keyword>
<keyword id="KW-0297">G-protein coupled receptor</keyword>
<keyword id="KW-0325">Glycoprotein</keyword>
<keyword id="KW-0472">Membrane</keyword>
<keyword id="KW-0597">Phosphoprotein</keyword>
<keyword id="KW-0600">Photoreceptor protein</keyword>
<keyword id="KW-0675">Receptor</keyword>
<keyword id="KW-1185">Reference proteome</keyword>
<keyword id="KW-0681">Retinal protein</keyword>
<keyword id="KW-0716">Sensory transduction</keyword>
<keyword id="KW-0807">Transducer</keyword>
<keyword id="KW-0812">Transmembrane</keyword>
<keyword id="KW-1133">Transmembrane helix</keyword>
<keyword id="KW-0844">Vision</keyword>